<evidence type="ECO:0000255" key="1">
    <source>
        <dbReference type="HAMAP-Rule" id="MF_00452"/>
    </source>
</evidence>
<dbReference type="EC" id="4.1.1.32" evidence="1"/>
<dbReference type="EMBL" id="CP000454">
    <property type="protein sequence ID" value="ABK02066.1"/>
    <property type="molecule type" value="Genomic_DNA"/>
</dbReference>
<dbReference type="RefSeq" id="WP_011690534.1">
    <property type="nucleotide sequence ID" value="NC_008541.1"/>
</dbReference>
<dbReference type="SMR" id="A0JSP6"/>
<dbReference type="STRING" id="290399.Arth_0667"/>
<dbReference type="KEGG" id="art:Arth_0667"/>
<dbReference type="eggNOG" id="COG1274">
    <property type="taxonomic scope" value="Bacteria"/>
</dbReference>
<dbReference type="HOGENOM" id="CLU_028872_1_1_11"/>
<dbReference type="OrthoDB" id="9758871at2"/>
<dbReference type="UniPathway" id="UPA00138"/>
<dbReference type="Proteomes" id="UP000000754">
    <property type="component" value="Chromosome"/>
</dbReference>
<dbReference type="GO" id="GO:0005829">
    <property type="term" value="C:cytosol"/>
    <property type="evidence" value="ECO:0007669"/>
    <property type="project" value="TreeGrafter"/>
</dbReference>
<dbReference type="GO" id="GO:0005525">
    <property type="term" value="F:GTP binding"/>
    <property type="evidence" value="ECO:0007669"/>
    <property type="project" value="UniProtKB-UniRule"/>
</dbReference>
<dbReference type="GO" id="GO:0030145">
    <property type="term" value="F:manganese ion binding"/>
    <property type="evidence" value="ECO:0007669"/>
    <property type="project" value="UniProtKB-UniRule"/>
</dbReference>
<dbReference type="GO" id="GO:0004613">
    <property type="term" value="F:phosphoenolpyruvate carboxykinase (GTP) activity"/>
    <property type="evidence" value="ECO:0007669"/>
    <property type="project" value="UniProtKB-UniRule"/>
</dbReference>
<dbReference type="GO" id="GO:0071333">
    <property type="term" value="P:cellular response to glucose stimulus"/>
    <property type="evidence" value="ECO:0007669"/>
    <property type="project" value="TreeGrafter"/>
</dbReference>
<dbReference type="GO" id="GO:0006094">
    <property type="term" value="P:gluconeogenesis"/>
    <property type="evidence" value="ECO:0007669"/>
    <property type="project" value="UniProtKB-UniRule"/>
</dbReference>
<dbReference type="GO" id="GO:0046327">
    <property type="term" value="P:glycerol biosynthetic process from pyruvate"/>
    <property type="evidence" value="ECO:0007669"/>
    <property type="project" value="TreeGrafter"/>
</dbReference>
<dbReference type="GO" id="GO:0006107">
    <property type="term" value="P:oxaloacetate metabolic process"/>
    <property type="evidence" value="ECO:0007669"/>
    <property type="project" value="TreeGrafter"/>
</dbReference>
<dbReference type="GO" id="GO:0019543">
    <property type="term" value="P:propionate catabolic process"/>
    <property type="evidence" value="ECO:0007669"/>
    <property type="project" value="TreeGrafter"/>
</dbReference>
<dbReference type="GO" id="GO:0033993">
    <property type="term" value="P:response to lipid"/>
    <property type="evidence" value="ECO:0007669"/>
    <property type="project" value="TreeGrafter"/>
</dbReference>
<dbReference type="GO" id="GO:0042594">
    <property type="term" value="P:response to starvation"/>
    <property type="evidence" value="ECO:0007669"/>
    <property type="project" value="TreeGrafter"/>
</dbReference>
<dbReference type="CDD" id="cd00819">
    <property type="entry name" value="PEPCK_GTP"/>
    <property type="match status" value="1"/>
</dbReference>
<dbReference type="FunFam" id="3.40.449.10:FF:000005">
    <property type="entry name" value="Phosphoenolpyruvate carboxykinase [GTP]"/>
    <property type="match status" value="1"/>
</dbReference>
<dbReference type="Gene3D" id="3.90.228.20">
    <property type="match status" value="1"/>
</dbReference>
<dbReference type="Gene3D" id="3.40.449.10">
    <property type="entry name" value="Phosphoenolpyruvate Carboxykinase, domain 1"/>
    <property type="match status" value="1"/>
</dbReference>
<dbReference type="Gene3D" id="2.170.8.10">
    <property type="entry name" value="Phosphoenolpyruvate Carboxykinase, domain 2"/>
    <property type="match status" value="1"/>
</dbReference>
<dbReference type="HAMAP" id="MF_00452">
    <property type="entry name" value="PEPCK_GTP"/>
    <property type="match status" value="1"/>
</dbReference>
<dbReference type="InterPro" id="IPR018091">
    <property type="entry name" value="PEP_carboxykin_GTP_CS"/>
</dbReference>
<dbReference type="InterPro" id="IPR013035">
    <property type="entry name" value="PEP_carboxykinase_C"/>
</dbReference>
<dbReference type="InterPro" id="IPR008209">
    <property type="entry name" value="PEP_carboxykinase_GTP"/>
</dbReference>
<dbReference type="InterPro" id="IPR035077">
    <property type="entry name" value="PEP_carboxykinase_GTP_C"/>
</dbReference>
<dbReference type="InterPro" id="IPR035078">
    <property type="entry name" value="PEP_carboxykinase_GTP_N"/>
</dbReference>
<dbReference type="InterPro" id="IPR008210">
    <property type="entry name" value="PEP_carboxykinase_N"/>
</dbReference>
<dbReference type="NCBIfam" id="NF003253">
    <property type="entry name" value="PRK04210.1"/>
    <property type="match status" value="1"/>
</dbReference>
<dbReference type="PANTHER" id="PTHR11561">
    <property type="entry name" value="PHOSPHOENOLPYRUVATE CARBOXYKINASE"/>
    <property type="match status" value="1"/>
</dbReference>
<dbReference type="PANTHER" id="PTHR11561:SF0">
    <property type="entry name" value="PHOSPHOENOLPYRUVATE CARBOXYKINASE [GTP]-RELATED"/>
    <property type="match status" value="1"/>
</dbReference>
<dbReference type="Pfam" id="PF00821">
    <property type="entry name" value="PEPCK_GTP"/>
    <property type="match status" value="1"/>
</dbReference>
<dbReference type="Pfam" id="PF17297">
    <property type="entry name" value="PEPCK_N"/>
    <property type="match status" value="1"/>
</dbReference>
<dbReference type="PIRSF" id="PIRSF001348">
    <property type="entry name" value="PEP_carboxykinase_GTP"/>
    <property type="match status" value="1"/>
</dbReference>
<dbReference type="SUPFAM" id="SSF68923">
    <property type="entry name" value="PEP carboxykinase N-terminal domain"/>
    <property type="match status" value="1"/>
</dbReference>
<dbReference type="SUPFAM" id="SSF53795">
    <property type="entry name" value="PEP carboxykinase-like"/>
    <property type="match status" value="1"/>
</dbReference>
<dbReference type="PROSITE" id="PS00505">
    <property type="entry name" value="PEPCK_GTP"/>
    <property type="match status" value="1"/>
</dbReference>
<reference key="1">
    <citation type="journal article" date="2013" name="Stand. Genomic Sci.">
        <title>Complete genome sequence of Arthrobacter sp. strain FB24.</title>
        <authorList>
            <person name="Nakatsu C.H."/>
            <person name="Barabote R."/>
            <person name="Thompson S."/>
            <person name="Bruce D."/>
            <person name="Detter C."/>
            <person name="Brettin T."/>
            <person name="Han C."/>
            <person name="Beasley F."/>
            <person name="Chen W."/>
            <person name="Konopka A."/>
            <person name="Xie G."/>
        </authorList>
    </citation>
    <scope>NUCLEOTIDE SEQUENCE [LARGE SCALE GENOMIC DNA]</scope>
    <source>
        <strain>FB24</strain>
    </source>
</reference>
<organism>
    <name type="scientific">Arthrobacter sp. (strain FB24)</name>
    <dbReference type="NCBI Taxonomy" id="290399"/>
    <lineage>
        <taxon>Bacteria</taxon>
        <taxon>Bacillati</taxon>
        <taxon>Actinomycetota</taxon>
        <taxon>Actinomycetes</taxon>
        <taxon>Micrococcales</taxon>
        <taxon>Micrococcaceae</taxon>
        <taxon>Arthrobacter</taxon>
    </lineage>
</organism>
<keyword id="KW-0963">Cytoplasm</keyword>
<keyword id="KW-0210">Decarboxylase</keyword>
<keyword id="KW-0312">Gluconeogenesis</keyword>
<keyword id="KW-0342">GTP-binding</keyword>
<keyword id="KW-0456">Lyase</keyword>
<keyword id="KW-0464">Manganese</keyword>
<keyword id="KW-0479">Metal-binding</keyword>
<keyword id="KW-0547">Nucleotide-binding</keyword>
<keyword id="KW-1185">Reference proteome</keyword>
<sequence length="611" mass="67176">MGDLARLPLLEKAPTTHAGLLAWVEEVAELTQPDRIHWVDGTEEEYTRLTGELVEAGTLTRLNPELFPNSFAAFSDPADVARVEEQTFICSENQRDAGFTNNWMAPAEMKQKLRGLFAGSMRGRTMYVIPFVMGHLDAEDPKFGVEITDSAYVVASMRIMANIGTEVLDKITATNAFFVPALHSLGAPLAPGQADVAWPCNPDKWIVHFPEERSIWSFGSGYGGNALLGKKCYALRIASVMARDEGWLAEHMLILKLTSPEKKSYYMSAAFPSACGKTNLALLDPTIEGWEVETLGDDITWMRIGKEGELRATNPEAGLFGVAPGTGWGTNPNAMRAIAKGHSIFTNVALTDDGGVWWEGMTEETPAHLTDWQGNSWTPDSDKPAAHPNSRFCTPISQIDMLAEEYYSPEGVELSAILFGGRRKTTVPLVTQARSWTNGIFMGSTLSSETTAAAAGQVGVLRRDPMAMLPFIGYDAGDYLKHWISVSGKANPERLPHIFLVNWFRRTADGDFAWPGFGDNARVLKWAIERIEGKADAIETPIGFVPAGHALDLTGLDLTHAHVEDAVRVDREEWDAELASIEEWYAKFGDSLPEALRAELDALKERMADHS</sequence>
<proteinExistence type="inferred from homology"/>
<accession>A0JSP6</accession>
<comment type="function">
    <text evidence="1">Catalyzes the conversion of oxaloacetate (OAA) to phosphoenolpyruvate (PEP), the rate-limiting step in the metabolic pathway that produces glucose from lactate and other precursors derived from the citric acid cycle.</text>
</comment>
<comment type="catalytic activity">
    <reaction evidence="1">
        <text>oxaloacetate + GTP = phosphoenolpyruvate + GDP + CO2</text>
        <dbReference type="Rhea" id="RHEA:10388"/>
        <dbReference type="ChEBI" id="CHEBI:16452"/>
        <dbReference type="ChEBI" id="CHEBI:16526"/>
        <dbReference type="ChEBI" id="CHEBI:37565"/>
        <dbReference type="ChEBI" id="CHEBI:58189"/>
        <dbReference type="ChEBI" id="CHEBI:58702"/>
        <dbReference type="EC" id="4.1.1.32"/>
    </reaction>
</comment>
<comment type="cofactor">
    <cofactor evidence="1">
        <name>Mn(2+)</name>
        <dbReference type="ChEBI" id="CHEBI:29035"/>
    </cofactor>
    <text evidence="1">Binds 1 Mn(2+) ion per subunit.</text>
</comment>
<comment type="pathway">
    <text evidence="1">Carbohydrate biosynthesis; gluconeogenesis.</text>
</comment>
<comment type="subunit">
    <text evidence="1">Monomer.</text>
</comment>
<comment type="subcellular location">
    <subcellularLocation>
        <location evidence="1">Cytoplasm</location>
    </subcellularLocation>
</comment>
<comment type="similarity">
    <text evidence="1">Belongs to the phosphoenolpyruvate carboxykinase [GTP] family.</text>
</comment>
<name>PCKG_ARTS2</name>
<gene>
    <name evidence="1" type="primary">pckG</name>
    <name type="ordered locus">Arth_0667</name>
</gene>
<feature type="chain" id="PRO_1000072370" description="Phosphoenolpyruvate carboxykinase [GTP]">
    <location>
        <begin position="1"/>
        <end position="611"/>
    </location>
</feature>
<feature type="active site" evidence="1">
    <location>
        <position position="275"/>
    </location>
</feature>
<feature type="binding site" evidence="1">
    <location>
        <position position="82"/>
    </location>
    <ligand>
        <name>substrate</name>
    </ligand>
</feature>
<feature type="binding site" evidence="1">
    <location>
        <begin position="222"/>
        <end position="224"/>
    </location>
    <ligand>
        <name>substrate</name>
    </ligand>
</feature>
<feature type="binding site" evidence="1">
    <location>
        <position position="231"/>
    </location>
    <ligand>
        <name>Mn(2+)</name>
        <dbReference type="ChEBI" id="CHEBI:29035"/>
    </ligand>
</feature>
<feature type="binding site" evidence="1">
    <location>
        <position position="251"/>
    </location>
    <ligand>
        <name>Mn(2+)</name>
        <dbReference type="ChEBI" id="CHEBI:29035"/>
    </ligand>
</feature>
<feature type="binding site" evidence="1">
    <location>
        <position position="273"/>
    </location>
    <ligand>
        <name>substrate</name>
    </ligand>
</feature>
<feature type="binding site" evidence="1">
    <location>
        <begin position="274"/>
        <end position="279"/>
    </location>
    <ligand>
        <name>GTP</name>
        <dbReference type="ChEBI" id="CHEBI:37565"/>
    </ligand>
</feature>
<feature type="binding site" evidence="1">
    <location>
        <position position="298"/>
    </location>
    <ligand>
        <name>Mn(2+)</name>
        <dbReference type="ChEBI" id="CHEBI:29035"/>
    </ligand>
</feature>
<feature type="binding site" evidence="1">
    <location>
        <begin position="389"/>
        <end position="391"/>
    </location>
    <ligand>
        <name>substrate</name>
    </ligand>
</feature>
<feature type="binding site" evidence="1">
    <location>
        <position position="391"/>
    </location>
    <ligand>
        <name>GTP</name>
        <dbReference type="ChEBI" id="CHEBI:37565"/>
    </ligand>
</feature>
<feature type="binding site" evidence="1">
    <location>
        <position position="422"/>
    </location>
    <ligand>
        <name>GTP</name>
        <dbReference type="ChEBI" id="CHEBI:37565"/>
    </ligand>
</feature>
<feature type="binding site" evidence="1">
    <location>
        <begin position="517"/>
        <end position="520"/>
    </location>
    <ligand>
        <name>GTP</name>
        <dbReference type="ChEBI" id="CHEBI:37565"/>
    </ligand>
</feature>
<protein>
    <recommendedName>
        <fullName evidence="1">Phosphoenolpyruvate carboxykinase [GTP]</fullName>
        <shortName evidence="1">PEP carboxykinase</shortName>
        <shortName evidence="1">PEPCK</shortName>
        <ecNumber evidence="1">4.1.1.32</ecNumber>
    </recommendedName>
</protein>